<dbReference type="EMBL" id="AM933173">
    <property type="protein sequence ID" value="CAR39353.1"/>
    <property type="molecule type" value="Genomic_DNA"/>
</dbReference>
<dbReference type="RefSeq" id="WP_001052213.1">
    <property type="nucleotide sequence ID" value="NC_011274.1"/>
</dbReference>
<dbReference type="SMR" id="B5RFV9"/>
<dbReference type="KEGG" id="seg:SG3564"/>
<dbReference type="HOGENOM" id="CLU_079215_4_5_6"/>
<dbReference type="Proteomes" id="UP000008321">
    <property type="component" value="Chromosome"/>
</dbReference>
<dbReference type="GO" id="GO:0005886">
    <property type="term" value="C:plasma membrane"/>
    <property type="evidence" value="ECO:0007669"/>
    <property type="project" value="UniProtKB-SubCell"/>
</dbReference>
<dbReference type="GO" id="GO:0045259">
    <property type="term" value="C:proton-transporting ATP synthase complex"/>
    <property type="evidence" value="ECO:0007669"/>
    <property type="project" value="UniProtKB-KW"/>
</dbReference>
<dbReference type="GO" id="GO:0046933">
    <property type="term" value="F:proton-transporting ATP synthase activity, rotational mechanism"/>
    <property type="evidence" value="ECO:0007669"/>
    <property type="project" value="UniProtKB-UniRule"/>
</dbReference>
<dbReference type="GO" id="GO:0046961">
    <property type="term" value="F:proton-transporting ATPase activity, rotational mechanism"/>
    <property type="evidence" value="ECO:0007669"/>
    <property type="project" value="TreeGrafter"/>
</dbReference>
<dbReference type="CDD" id="cd06503">
    <property type="entry name" value="ATP-synt_Fo_b"/>
    <property type="match status" value="1"/>
</dbReference>
<dbReference type="FunFam" id="1.20.5.620:FF:000001">
    <property type="entry name" value="ATP synthase subunit b"/>
    <property type="match status" value="1"/>
</dbReference>
<dbReference type="Gene3D" id="1.20.5.620">
    <property type="entry name" value="F1F0 ATP synthase subunit B, membrane domain"/>
    <property type="match status" value="1"/>
</dbReference>
<dbReference type="HAMAP" id="MF_01398">
    <property type="entry name" value="ATP_synth_b_bprime"/>
    <property type="match status" value="1"/>
</dbReference>
<dbReference type="InterPro" id="IPR028987">
    <property type="entry name" value="ATP_synth_B-like_membr_sf"/>
</dbReference>
<dbReference type="InterPro" id="IPR002146">
    <property type="entry name" value="ATP_synth_b/b'su_bac/chlpt"/>
</dbReference>
<dbReference type="InterPro" id="IPR005864">
    <property type="entry name" value="ATP_synth_F0_bsu_bac"/>
</dbReference>
<dbReference type="InterPro" id="IPR050059">
    <property type="entry name" value="ATP_synthase_B_chain"/>
</dbReference>
<dbReference type="NCBIfam" id="TIGR01144">
    <property type="entry name" value="ATP_synt_b"/>
    <property type="match status" value="1"/>
</dbReference>
<dbReference type="NCBIfam" id="NF004411">
    <property type="entry name" value="PRK05759.1-2"/>
    <property type="match status" value="1"/>
</dbReference>
<dbReference type="NCBIfam" id="NF004413">
    <property type="entry name" value="PRK05759.1-4"/>
    <property type="match status" value="1"/>
</dbReference>
<dbReference type="PANTHER" id="PTHR33445:SF1">
    <property type="entry name" value="ATP SYNTHASE SUBUNIT B"/>
    <property type="match status" value="1"/>
</dbReference>
<dbReference type="PANTHER" id="PTHR33445">
    <property type="entry name" value="ATP SYNTHASE SUBUNIT B', CHLOROPLASTIC"/>
    <property type="match status" value="1"/>
</dbReference>
<dbReference type="Pfam" id="PF00430">
    <property type="entry name" value="ATP-synt_B"/>
    <property type="match status" value="1"/>
</dbReference>
<dbReference type="SUPFAM" id="SSF81573">
    <property type="entry name" value="F1F0 ATP synthase subunit B, membrane domain"/>
    <property type="match status" value="1"/>
</dbReference>
<proteinExistence type="inferred from homology"/>
<organism>
    <name type="scientific">Salmonella gallinarum (strain 287/91 / NCTC 13346)</name>
    <dbReference type="NCBI Taxonomy" id="550538"/>
    <lineage>
        <taxon>Bacteria</taxon>
        <taxon>Pseudomonadati</taxon>
        <taxon>Pseudomonadota</taxon>
        <taxon>Gammaproteobacteria</taxon>
        <taxon>Enterobacterales</taxon>
        <taxon>Enterobacteriaceae</taxon>
        <taxon>Salmonella</taxon>
    </lineage>
</organism>
<name>ATPF_SALG2</name>
<reference key="1">
    <citation type="journal article" date="2008" name="Genome Res.">
        <title>Comparative genome analysis of Salmonella enteritidis PT4 and Salmonella gallinarum 287/91 provides insights into evolutionary and host adaptation pathways.</title>
        <authorList>
            <person name="Thomson N.R."/>
            <person name="Clayton D.J."/>
            <person name="Windhorst D."/>
            <person name="Vernikos G."/>
            <person name="Davidson S."/>
            <person name="Churcher C."/>
            <person name="Quail M.A."/>
            <person name="Stevens M."/>
            <person name="Jones M.A."/>
            <person name="Watson M."/>
            <person name="Barron A."/>
            <person name="Layton A."/>
            <person name="Pickard D."/>
            <person name="Kingsley R.A."/>
            <person name="Bignell A."/>
            <person name="Clark L."/>
            <person name="Harris B."/>
            <person name="Ormond D."/>
            <person name="Abdellah Z."/>
            <person name="Brooks K."/>
            <person name="Cherevach I."/>
            <person name="Chillingworth T."/>
            <person name="Woodward J."/>
            <person name="Norberczak H."/>
            <person name="Lord A."/>
            <person name="Arrowsmith C."/>
            <person name="Jagels K."/>
            <person name="Moule S."/>
            <person name="Mungall K."/>
            <person name="Saunders M."/>
            <person name="Whitehead S."/>
            <person name="Chabalgoity J.A."/>
            <person name="Maskell D."/>
            <person name="Humphreys T."/>
            <person name="Roberts M."/>
            <person name="Barrow P.A."/>
            <person name="Dougan G."/>
            <person name="Parkhill J."/>
        </authorList>
    </citation>
    <scope>NUCLEOTIDE SEQUENCE [LARGE SCALE GENOMIC DNA]</scope>
    <source>
        <strain>287/91 / NCTC 13346</strain>
    </source>
</reference>
<keyword id="KW-0066">ATP synthesis</keyword>
<keyword id="KW-0997">Cell inner membrane</keyword>
<keyword id="KW-1003">Cell membrane</keyword>
<keyword id="KW-0138">CF(0)</keyword>
<keyword id="KW-0375">Hydrogen ion transport</keyword>
<keyword id="KW-0406">Ion transport</keyword>
<keyword id="KW-0472">Membrane</keyword>
<keyword id="KW-0812">Transmembrane</keyword>
<keyword id="KW-1133">Transmembrane helix</keyword>
<keyword id="KW-0813">Transport</keyword>
<accession>B5RFV9</accession>
<gene>
    <name evidence="1" type="primary">atpF</name>
    <name type="ordered locus">SG3564</name>
</gene>
<protein>
    <recommendedName>
        <fullName evidence="1">ATP synthase subunit b</fullName>
    </recommendedName>
    <alternativeName>
        <fullName evidence="1">ATP synthase F(0) sector subunit b</fullName>
    </alternativeName>
    <alternativeName>
        <fullName evidence="1">ATPase subunit I</fullName>
    </alternativeName>
    <alternativeName>
        <fullName evidence="1">F-type ATPase subunit b</fullName>
        <shortName evidence="1">F-ATPase subunit b</shortName>
    </alternativeName>
</protein>
<sequence length="156" mass="17393">MNLNATILGQAIAFILFVWFCMKYVWPPLMAAIEKRQKEIADGLASAERAHKDLDLAKASATDQLKKAKAEVQVIIEQANKRRAQILDEAKTEAEQERTKIVAQAQAEIEAERKRAREELRKQVAILAVAGAEKIIERSVDEAANSDIVDKLVAEL</sequence>
<evidence type="ECO:0000255" key="1">
    <source>
        <dbReference type="HAMAP-Rule" id="MF_01398"/>
    </source>
</evidence>
<comment type="function">
    <text evidence="1">F(1)F(0) ATP synthase produces ATP from ADP in the presence of a proton or sodium gradient. F-type ATPases consist of two structural domains, F(1) containing the extramembraneous catalytic core and F(0) containing the membrane proton channel, linked together by a central stalk and a peripheral stalk. During catalysis, ATP synthesis in the catalytic domain of F(1) is coupled via a rotary mechanism of the central stalk subunits to proton translocation.</text>
</comment>
<comment type="function">
    <text evidence="1">Component of the F(0) channel, it forms part of the peripheral stalk, linking F(1) to F(0).</text>
</comment>
<comment type="subunit">
    <text evidence="1">F-type ATPases have 2 components, F(1) - the catalytic core - and F(0) - the membrane proton channel. F(1) has five subunits: alpha(3), beta(3), gamma(1), delta(1), epsilon(1). F(0) has three main subunits: a(1), b(2) and c(10-14). The alpha and beta chains form an alternating ring which encloses part of the gamma chain. F(1) is attached to F(0) by a central stalk formed by the gamma and epsilon chains, while a peripheral stalk is formed by the delta and b chains.</text>
</comment>
<comment type="subcellular location">
    <subcellularLocation>
        <location evidence="1">Cell inner membrane</location>
        <topology evidence="1">Single-pass membrane protein</topology>
    </subcellularLocation>
</comment>
<comment type="similarity">
    <text evidence="1">Belongs to the ATPase B chain family.</text>
</comment>
<feature type="chain" id="PRO_0000368743" description="ATP synthase subunit b">
    <location>
        <begin position="1"/>
        <end position="156"/>
    </location>
</feature>
<feature type="transmembrane region" description="Helical" evidence="1">
    <location>
        <begin position="11"/>
        <end position="31"/>
    </location>
</feature>